<name>PFF1_BOTFB</name>
<proteinExistence type="inferred from homology"/>
<evidence type="ECO:0000250" key="1">
    <source>
        <dbReference type="UniProtKB" id="P38244"/>
    </source>
</evidence>
<evidence type="ECO:0000250" key="2">
    <source>
        <dbReference type="UniProtKB" id="P80561"/>
    </source>
</evidence>
<evidence type="ECO:0000255" key="3"/>
<evidence type="ECO:0000255" key="4">
    <source>
        <dbReference type="PROSITE-ProRule" id="PRU00498"/>
    </source>
</evidence>
<evidence type="ECO:0000256" key="5">
    <source>
        <dbReference type="SAM" id="MobiDB-lite"/>
    </source>
</evidence>
<evidence type="ECO:0000305" key="6"/>
<comment type="function">
    <text evidence="1">May be involved in vacuolar sorting and osmoregulation.</text>
</comment>
<comment type="cofactor">
    <cofactor evidence="2">
        <name>Zn(2+)</name>
        <dbReference type="ChEBI" id="CHEBI:29105"/>
    </cofactor>
    <text evidence="2">Binds 2 Zn(2+) ions per subunit.</text>
</comment>
<comment type="subcellular location">
    <subcellularLocation>
        <location evidence="1">Vacuole membrane</location>
        <topology evidence="3">Multi-pass membrane protein</topology>
    </subcellularLocation>
</comment>
<comment type="similarity">
    <text evidence="6">Belongs to the peptidase M28 family.</text>
</comment>
<sequence length="1049" mass="116412">MKCYNPSAFVPMAVTLVTVIIYLGVFIPLLIIQETVPSAPDDPTLYNGLNLTEAWLDLQSLSDGYHPFNSRKNDDVRNWLLKRIGEILDHNQIQYSTETESATISETQIKSDFDAEAPESVPSPSNSNDGSAERYHEDLRARKESPAVTVFNDLRSNYSSNALTSIGVKGRKLGISTYFEGNNIICYVRGSDDEEGEWWKTGSVNSKGKVHGKGGVMVNAHFDSVSTGFGATDDGVGVVTALQLIRYFTTPQNVPQKGFVALFNNGEEDGLYGAKAFLSHPMARFVHTFLNLEGAGAGGRATLFRSTDSEVTRAYAHAKHPFGTVVSSDGFSLGYVRSETDYVVFRAEGYRGLDVAFWQPRSQYHTDQDDAKHTSIDSLWHMLSASVATTRSLTKDTGNTFLGPRGDDKVGKVSNGKGSDGVWFDIFGTVFAVFKLRTLFAWSLTLLIAAPLMLFAVSYLLNRQDKFYFFAGSIKAKGPEDEPISLGGWRGAFRYPITLIITCAITFGCASLINKINPMIVYSSPYSVWSMSASLFFSIFWFIMAGCNFVRPSALQRGYAFMWLFVFGWIILVAATVYEDRFKISGGYLFVFYEAAIFLATLIAIGEQFALPKKSTYVENSQLDHDGNQDSHHQAVMGTDGANGADEANASNEAGQEEDPEDNVNDLAVPHETTPLIGGGAPTQRSSISTTFANRYRQVVPESYDGPADHHDKKGHKKHPYGGEQDWSAKLPIWTWLVQYLLVGPFILIVVGQVGLFLVAALHQTGTDGSPLLLPYLVVAVFSILLLLPVTPFIHRLTHHMPTFFFLVFIGTLIYNLVAFPFSPNNRYKAYFQQTVDLDTGLNKVTIVGIEQYIREIIAYIPSAAGQTINCEENPRIRSGLSFCSYEGIAPRVVDNVVDGIPPEKGYTDWLTYNVTRVPNENKATFHISGLETRACILRFDDPFSEFKVHGGAKTEERWDDVPDSGSDQIKLWSRDWNKEWKVDVEWAVGEDMKPGEEGRTGRVVCLWSDANERGVIPALDEARRFSPDWTSVVKLMDGLVEGSKRFVV</sequence>
<gene>
    <name type="ORF">BC1G_08418</name>
    <name type="ORF">BCIN_08g00540</name>
</gene>
<reference key="1">
    <citation type="journal article" date="2011" name="PLoS Genet.">
        <title>Genomic analysis of the necrotrophic fungal pathogens Sclerotinia sclerotiorum and Botrytis cinerea.</title>
        <authorList>
            <person name="Amselem J."/>
            <person name="Cuomo C.A."/>
            <person name="van Kan J.A.L."/>
            <person name="Viaud M."/>
            <person name="Benito E.P."/>
            <person name="Couloux A."/>
            <person name="Coutinho P.M."/>
            <person name="de Vries R.P."/>
            <person name="Dyer P.S."/>
            <person name="Fillinger S."/>
            <person name="Fournier E."/>
            <person name="Gout L."/>
            <person name="Hahn M."/>
            <person name="Kohn L."/>
            <person name="Lapalu N."/>
            <person name="Plummer K.M."/>
            <person name="Pradier J.-M."/>
            <person name="Quevillon E."/>
            <person name="Sharon A."/>
            <person name="Simon A."/>
            <person name="ten Have A."/>
            <person name="Tudzynski B."/>
            <person name="Tudzynski P."/>
            <person name="Wincker P."/>
            <person name="Andrew M."/>
            <person name="Anthouard V."/>
            <person name="Beever R.E."/>
            <person name="Beffa R."/>
            <person name="Benoit I."/>
            <person name="Bouzid O."/>
            <person name="Brault B."/>
            <person name="Chen Z."/>
            <person name="Choquer M."/>
            <person name="Collemare J."/>
            <person name="Cotton P."/>
            <person name="Danchin E.G."/>
            <person name="Da Silva C."/>
            <person name="Gautier A."/>
            <person name="Giraud C."/>
            <person name="Giraud T."/>
            <person name="Gonzalez C."/>
            <person name="Grossetete S."/>
            <person name="Gueldener U."/>
            <person name="Henrissat B."/>
            <person name="Howlett B.J."/>
            <person name="Kodira C."/>
            <person name="Kretschmer M."/>
            <person name="Lappartient A."/>
            <person name="Leroch M."/>
            <person name="Levis C."/>
            <person name="Mauceli E."/>
            <person name="Neuveglise C."/>
            <person name="Oeser B."/>
            <person name="Pearson M."/>
            <person name="Poulain J."/>
            <person name="Poussereau N."/>
            <person name="Quesneville H."/>
            <person name="Rascle C."/>
            <person name="Schumacher J."/>
            <person name="Segurens B."/>
            <person name="Sexton A."/>
            <person name="Silva E."/>
            <person name="Sirven C."/>
            <person name="Soanes D.M."/>
            <person name="Talbot N.J."/>
            <person name="Templeton M."/>
            <person name="Yandava C."/>
            <person name="Yarden O."/>
            <person name="Zeng Q."/>
            <person name="Rollins J.A."/>
            <person name="Lebrun M.-H."/>
            <person name="Dickman M."/>
        </authorList>
    </citation>
    <scope>NUCLEOTIDE SEQUENCE [LARGE SCALE GENOMIC DNA]</scope>
    <source>
        <strain>B05.10</strain>
    </source>
</reference>
<reference key="2">
    <citation type="journal article" date="2012" name="Eukaryot. Cell">
        <title>Genome update of Botrytis cinerea strains B05.10 and T4.</title>
        <authorList>
            <person name="Staats M."/>
            <person name="van Kan J.A.L."/>
        </authorList>
    </citation>
    <scope>NUCLEOTIDE SEQUENCE [LARGE SCALE GENOMIC DNA]</scope>
    <scope>GENOME REANNOTATION</scope>
    <source>
        <strain>B05.10</strain>
    </source>
</reference>
<reference key="3">
    <citation type="journal article" date="2017" name="Mol. Plant Pathol.">
        <title>A gapless genome sequence of the fungus Botrytis cinerea.</title>
        <authorList>
            <person name="van Kan J.A.L."/>
            <person name="Stassen J.H.M."/>
            <person name="Mosbach A."/>
            <person name="van der Lee T.A.J."/>
            <person name="Faino L."/>
            <person name="Farmer A.D."/>
            <person name="Papasotiriou D.G."/>
            <person name="Zhou S."/>
            <person name="Seidl M.F."/>
            <person name="Cottam E."/>
            <person name="Edel D."/>
            <person name="Hahn M."/>
            <person name="Schwartz D.C."/>
            <person name="Dietrich R.A."/>
            <person name="Widdison S."/>
            <person name="Scalliet G."/>
        </authorList>
    </citation>
    <scope>NUCLEOTIDE SEQUENCE [LARGE SCALE GENOMIC DNA]</scope>
    <scope>GENOME REANNOTATION</scope>
    <source>
        <strain>B05.10</strain>
    </source>
</reference>
<organism>
    <name type="scientific">Botryotinia fuckeliana (strain B05.10)</name>
    <name type="common">Noble rot fungus</name>
    <name type="synonym">Botrytis cinerea</name>
    <dbReference type="NCBI Taxonomy" id="332648"/>
    <lineage>
        <taxon>Eukaryota</taxon>
        <taxon>Fungi</taxon>
        <taxon>Dikarya</taxon>
        <taxon>Ascomycota</taxon>
        <taxon>Pezizomycotina</taxon>
        <taxon>Leotiomycetes</taxon>
        <taxon>Helotiales</taxon>
        <taxon>Sclerotiniaceae</taxon>
        <taxon>Botrytis</taxon>
    </lineage>
</organism>
<dbReference type="EC" id="3.4.-.-" evidence="6"/>
<dbReference type="EMBL" id="CP009812">
    <property type="protein sequence ID" value="ATZ52297.1"/>
    <property type="molecule type" value="Genomic_DNA"/>
</dbReference>
<dbReference type="SMR" id="A6S8A1"/>
<dbReference type="EnsemblFungi" id="Bcin08g00540.1">
    <property type="protein sequence ID" value="Bcin08p00540.1"/>
    <property type="gene ID" value="Bcin08g00540"/>
</dbReference>
<dbReference type="VEuPathDB" id="FungiDB:Bcin08g00540"/>
<dbReference type="OrthoDB" id="76293at2759"/>
<dbReference type="Proteomes" id="UP000001798">
    <property type="component" value="Chromosome bcin08"/>
</dbReference>
<dbReference type="GO" id="GO:0005774">
    <property type="term" value="C:vacuolar membrane"/>
    <property type="evidence" value="ECO:0007669"/>
    <property type="project" value="UniProtKB-SubCell"/>
</dbReference>
<dbReference type="GO" id="GO:0046872">
    <property type="term" value="F:metal ion binding"/>
    <property type="evidence" value="ECO:0007669"/>
    <property type="project" value="UniProtKB-KW"/>
</dbReference>
<dbReference type="GO" id="GO:0008235">
    <property type="term" value="F:metalloexopeptidase activity"/>
    <property type="evidence" value="ECO:0007669"/>
    <property type="project" value="InterPro"/>
</dbReference>
<dbReference type="GO" id="GO:0006508">
    <property type="term" value="P:proteolysis"/>
    <property type="evidence" value="ECO:0007669"/>
    <property type="project" value="UniProtKB-KW"/>
</dbReference>
<dbReference type="CDD" id="cd03875">
    <property type="entry name" value="M28_Fxna_like"/>
    <property type="match status" value="1"/>
</dbReference>
<dbReference type="FunFam" id="3.40.630.10:FF:000057">
    <property type="entry name" value="Vacuolar membrane protease"/>
    <property type="match status" value="1"/>
</dbReference>
<dbReference type="Gene3D" id="3.40.630.10">
    <property type="entry name" value="Zn peptidases"/>
    <property type="match status" value="1"/>
</dbReference>
<dbReference type="InterPro" id="IPR048024">
    <property type="entry name" value="Fxna-like_M28_dom"/>
</dbReference>
<dbReference type="InterPro" id="IPR045175">
    <property type="entry name" value="M28_fam"/>
</dbReference>
<dbReference type="InterPro" id="IPR007484">
    <property type="entry name" value="Peptidase_M28"/>
</dbReference>
<dbReference type="InterPro" id="IPR053975">
    <property type="entry name" value="PFF1_C"/>
</dbReference>
<dbReference type="InterPro" id="IPR053976">
    <property type="entry name" value="PFF1_TM"/>
</dbReference>
<dbReference type="PANTHER" id="PTHR12147">
    <property type="entry name" value="METALLOPEPTIDASE M28 FAMILY MEMBER"/>
    <property type="match status" value="1"/>
</dbReference>
<dbReference type="PANTHER" id="PTHR12147:SF58">
    <property type="entry name" value="VACUOLAR MEMBRANE PROTEASE"/>
    <property type="match status" value="1"/>
</dbReference>
<dbReference type="Pfam" id="PF04389">
    <property type="entry name" value="Peptidase_M28"/>
    <property type="match status" value="1"/>
</dbReference>
<dbReference type="Pfam" id="PF22250">
    <property type="entry name" value="PFF1_C"/>
    <property type="match status" value="1"/>
</dbReference>
<dbReference type="Pfam" id="PF22251">
    <property type="entry name" value="PFF1_TM"/>
    <property type="match status" value="1"/>
</dbReference>
<dbReference type="SUPFAM" id="SSF53187">
    <property type="entry name" value="Zn-dependent exopeptidases"/>
    <property type="match status" value="1"/>
</dbReference>
<keyword id="KW-0325">Glycoprotein</keyword>
<keyword id="KW-0378">Hydrolase</keyword>
<keyword id="KW-0472">Membrane</keyword>
<keyword id="KW-0479">Metal-binding</keyword>
<keyword id="KW-0482">Metalloprotease</keyword>
<keyword id="KW-0645">Protease</keyword>
<keyword id="KW-1185">Reference proteome</keyword>
<keyword id="KW-0812">Transmembrane</keyword>
<keyword id="KW-1133">Transmembrane helix</keyword>
<keyword id="KW-0926">Vacuole</keyword>
<keyword id="KW-0862">Zinc</keyword>
<feature type="chain" id="PRO_0000411704" description="Vacuolar membrane protease">
    <location>
        <begin position="1"/>
        <end position="1049"/>
    </location>
</feature>
<feature type="topological domain" description="Cytoplasmic" evidence="1">
    <location>
        <begin position="1"/>
        <end position="11"/>
    </location>
</feature>
<feature type="transmembrane region" description="Helical; Name=1" evidence="3">
    <location>
        <begin position="12"/>
        <end position="32"/>
    </location>
</feature>
<feature type="topological domain" description="Vacuolar" evidence="1">
    <location>
        <begin position="33"/>
        <end position="438"/>
    </location>
</feature>
<feature type="transmembrane region" description="Helical; Name=2" evidence="3">
    <location>
        <begin position="439"/>
        <end position="459"/>
    </location>
</feature>
<feature type="topological domain" description="Cytoplasmic" evidence="1">
    <location>
        <begin position="460"/>
        <end position="495"/>
    </location>
</feature>
<feature type="transmembrane region" description="Helical; Name=3" evidence="3">
    <location>
        <begin position="496"/>
        <end position="516"/>
    </location>
</feature>
<feature type="topological domain" description="Vacuolar" evidence="1">
    <location>
        <begin position="517"/>
        <end position="526"/>
    </location>
</feature>
<feature type="transmembrane region" description="Helical; Name=4" evidence="3">
    <location>
        <begin position="527"/>
        <end position="547"/>
    </location>
</feature>
<feature type="topological domain" description="Cytoplasmic" evidence="1">
    <location>
        <begin position="548"/>
        <end position="557"/>
    </location>
</feature>
<feature type="transmembrane region" description="Helical; Name=5" evidence="3">
    <location>
        <begin position="558"/>
        <end position="578"/>
    </location>
</feature>
<feature type="topological domain" description="Vacuolar" evidence="1">
    <location>
        <begin position="579"/>
        <end position="585"/>
    </location>
</feature>
<feature type="transmembrane region" description="Helical; Name=6" evidence="3">
    <location>
        <begin position="586"/>
        <end position="606"/>
    </location>
</feature>
<feature type="topological domain" description="Cytoplasmic" evidence="1">
    <location>
        <begin position="607"/>
        <end position="740"/>
    </location>
</feature>
<feature type="transmembrane region" description="Helical; Name=7" evidence="3">
    <location>
        <begin position="741"/>
        <end position="761"/>
    </location>
</feature>
<feature type="topological domain" description="Vacuolar" evidence="1">
    <location>
        <begin position="762"/>
        <end position="773"/>
    </location>
</feature>
<feature type="transmembrane region" description="Helical; Name=8" evidence="3">
    <location>
        <begin position="774"/>
        <end position="794"/>
    </location>
</feature>
<feature type="topological domain" description="Cytoplasmic" evidence="1">
    <location>
        <begin position="795"/>
        <end position="801"/>
    </location>
</feature>
<feature type="transmembrane region" description="Helical; Name=9" evidence="3">
    <location>
        <begin position="802"/>
        <end position="822"/>
    </location>
</feature>
<feature type="topological domain" description="Vacuolar" evidence="1">
    <location>
        <begin position="823"/>
        <end position="1049"/>
    </location>
</feature>
<feature type="region of interest" description="Disordered" evidence="5">
    <location>
        <begin position="114"/>
        <end position="135"/>
    </location>
</feature>
<feature type="region of interest" description="Disordered" evidence="5">
    <location>
        <begin position="621"/>
        <end position="686"/>
    </location>
</feature>
<feature type="compositionally biased region" description="Basic and acidic residues" evidence="5">
    <location>
        <begin position="622"/>
        <end position="633"/>
    </location>
</feature>
<feature type="compositionally biased region" description="Acidic residues" evidence="5">
    <location>
        <begin position="655"/>
        <end position="664"/>
    </location>
</feature>
<feature type="active site" description="Proton acceptor" evidence="2">
    <location>
        <position position="267"/>
    </location>
</feature>
<feature type="binding site" evidence="2">
    <location>
        <position position="221"/>
    </location>
    <ligand>
        <name>Zn(2+)</name>
        <dbReference type="ChEBI" id="CHEBI:29105"/>
        <label>1</label>
        <note>catalytic</note>
    </ligand>
</feature>
<feature type="binding site" evidence="2">
    <location>
        <position position="233"/>
    </location>
    <ligand>
        <name>Zn(2+)</name>
        <dbReference type="ChEBI" id="CHEBI:29105"/>
        <label>1</label>
        <note>catalytic</note>
    </ligand>
</feature>
<feature type="binding site" evidence="2">
    <location>
        <position position="233"/>
    </location>
    <ligand>
        <name>Zn(2+)</name>
        <dbReference type="ChEBI" id="CHEBI:29105"/>
        <label>2</label>
        <note>catalytic</note>
    </ligand>
</feature>
<feature type="binding site" evidence="2">
    <location>
        <position position="268"/>
    </location>
    <ligand>
        <name>Zn(2+)</name>
        <dbReference type="ChEBI" id="CHEBI:29105"/>
        <label>2</label>
        <note>catalytic</note>
    </ligand>
</feature>
<feature type="binding site" evidence="2">
    <location>
        <position position="293"/>
    </location>
    <ligand>
        <name>Zn(2+)</name>
        <dbReference type="ChEBI" id="CHEBI:29105"/>
        <label>1</label>
        <note>catalytic</note>
    </ligand>
</feature>
<feature type="binding site" evidence="2">
    <location>
        <position position="365"/>
    </location>
    <ligand>
        <name>Zn(2+)</name>
        <dbReference type="ChEBI" id="CHEBI:29105"/>
        <label>2</label>
        <note>catalytic</note>
    </ligand>
</feature>
<feature type="site" description="Transition state stabilizer" evidence="2">
    <location>
        <position position="364"/>
    </location>
</feature>
<feature type="glycosylation site" description="N-linked (GlcNAc...) asparagine" evidence="4">
    <location>
        <position position="50"/>
    </location>
</feature>
<feature type="glycosylation site" description="N-linked (GlcNAc...) asparagine" evidence="4">
    <location>
        <position position="157"/>
    </location>
</feature>
<feature type="glycosylation site" description="N-linked (GlcNAc...) asparagine" evidence="4">
    <location>
        <position position="914"/>
    </location>
</feature>
<accession>A6S8A1</accession>
<accession>A0A384JPI0</accession>
<protein>
    <recommendedName>
        <fullName evidence="1">Vacuolar membrane protease</fullName>
        <ecNumber evidence="6">3.4.-.-</ecNumber>
    </recommendedName>
    <alternativeName>
        <fullName evidence="1">FXNA-related family protease 1</fullName>
    </alternativeName>
</protein>